<name>BGLK_ASPFU</name>
<proteinExistence type="inferred from homology"/>
<keyword id="KW-0119">Carbohydrate metabolism</keyword>
<keyword id="KW-0136">Cellulose degradation</keyword>
<keyword id="KW-0325">Glycoprotein</keyword>
<keyword id="KW-0326">Glycosidase</keyword>
<keyword id="KW-0378">Hydrolase</keyword>
<keyword id="KW-0624">Polysaccharide degradation</keyword>
<keyword id="KW-1185">Reference proteome</keyword>
<keyword id="KW-0964">Secreted</keyword>
<evidence type="ECO:0000250" key="1"/>
<evidence type="ECO:0000255" key="2"/>
<evidence type="ECO:0000255" key="3">
    <source>
        <dbReference type="PROSITE-ProRule" id="PRU01164"/>
    </source>
</evidence>
<evidence type="ECO:0000256" key="4">
    <source>
        <dbReference type="SAM" id="MobiDB-lite"/>
    </source>
</evidence>
<evidence type="ECO:0000305" key="5"/>
<protein>
    <recommendedName>
        <fullName>Probable beta-glucosidase K</fullName>
        <ecNumber>3.2.1.21</ecNumber>
    </recommendedName>
    <alternativeName>
        <fullName>Beta-D-glucoside glucohydrolase K</fullName>
    </alternativeName>
    <alternativeName>
        <fullName>Cellobiase K</fullName>
    </alternativeName>
    <alternativeName>
        <fullName>Gentiobiase K</fullName>
    </alternativeName>
</protein>
<feature type="chain" id="PRO_0000394897" description="Probable beta-glucosidase K">
    <location>
        <begin position="1"/>
        <end position="767"/>
    </location>
</feature>
<feature type="domain" description="PA14" evidence="3">
    <location>
        <begin position="405"/>
        <end position="552"/>
    </location>
</feature>
<feature type="region of interest" description="Disordered" evidence="4">
    <location>
        <begin position="727"/>
        <end position="767"/>
    </location>
</feature>
<feature type="compositionally biased region" description="Polar residues" evidence="4">
    <location>
        <begin position="743"/>
        <end position="757"/>
    </location>
</feature>
<feature type="active site" evidence="1">
    <location>
        <position position="232"/>
    </location>
</feature>
<feature type="glycosylation site" description="N-linked (GlcNAc...) asparagine" evidence="2">
    <location>
        <position position="19"/>
    </location>
</feature>
<feature type="glycosylation site" description="N-linked (GlcNAc...) asparagine" evidence="2">
    <location>
        <position position="324"/>
    </location>
</feature>
<feature type="glycosylation site" description="N-linked (GlcNAc...) asparagine" evidence="2">
    <location>
        <position position="477"/>
    </location>
</feature>
<feature type="glycosylation site" description="N-linked (GlcNAc...) asparagine" evidence="2">
    <location>
        <position position="749"/>
    </location>
</feature>
<accession>Q4WA69</accession>
<gene>
    <name type="primary">bglK</name>
    <name type="ORF">AFUA_7G00240</name>
</gene>
<dbReference type="EC" id="3.2.1.21"/>
<dbReference type="EMBL" id="AAHF01000015">
    <property type="protein sequence ID" value="EAL84867.1"/>
    <property type="molecule type" value="Genomic_DNA"/>
</dbReference>
<dbReference type="RefSeq" id="XP_746905.1">
    <property type="nucleotide sequence ID" value="XM_741812.1"/>
</dbReference>
<dbReference type="SMR" id="Q4WA69"/>
<dbReference type="STRING" id="330879.Q4WA69"/>
<dbReference type="GlyCosmos" id="Q4WA69">
    <property type="glycosylation" value="4 sites, No reported glycans"/>
</dbReference>
<dbReference type="EnsemblFungi" id="EAL84867">
    <property type="protein sequence ID" value="EAL84867"/>
    <property type="gene ID" value="AFUA_7G00240"/>
</dbReference>
<dbReference type="GeneID" id="3504260"/>
<dbReference type="KEGG" id="afm:AFUA_7G00240"/>
<dbReference type="VEuPathDB" id="FungiDB:Afu7g00240"/>
<dbReference type="eggNOG" id="ENOG502SMPY">
    <property type="taxonomic scope" value="Eukaryota"/>
</dbReference>
<dbReference type="HOGENOM" id="CLU_004542_4_0_1"/>
<dbReference type="InParanoid" id="Q4WA69"/>
<dbReference type="OMA" id="CWSSERG"/>
<dbReference type="OrthoDB" id="47059at2759"/>
<dbReference type="UniPathway" id="UPA00696"/>
<dbReference type="Proteomes" id="UP000002530">
    <property type="component" value="Chromosome 7"/>
</dbReference>
<dbReference type="GO" id="GO:0005576">
    <property type="term" value="C:extracellular region"/>
    <property type="evidence" value="ECO:0007669"/>
    <property type="project" value="UniProtKB-SubCell"/>
</dbReference>
<dbReference type="GO" id="GO:0008422">
    <property type="term" value="F:beta-glucosidase activity"/>
    <property type="evidence" value="ECO:0000318"/>
    <property type="project" value="GO_Central"/>
</dbReference>
<dbReference type="GO" id="GO:0030245">
    <property type="term" value="P:cellulose catabolic process"/>
    <property type="evidence" value="ECO:0007669"/>
    <property type="project" value="UniProtKB-UniPathway"/>
</dbReference>
<dbReference type="GO" id="GO:0009251">
    <property type="term" value="P:glucan catabolic process"/>
    <property type="evidence" value="ECO:0000318"/>
    <property type="project" value="GO_Central"/>
</dbReference>
<dbReference type="FunFam" id="3.20.20.300:FF:000006">
    <property type="entry name" value="Beta-glucosidase H"/>
    <property type="match status" value="1"/>
</dbReference>
<dbReference type="Gene3D" id="2.60.120.260">
    <property type="entry name" value="Galactose-binding domain-like"/>
    <property type="match status" value="1"/>
</dbReference>
<dbReference type="Gene3D" id="3.40.50.1700">
    <property type="entry name" value="Glycoside hydrolase family 3 C-terminal domain"/>
    <property type="match status" value="1"/>
</dbReference>
<dbReference type="Gene3D" id="3.20.20.300">
    <property type="entry name" value="Glycoside hydrolase, family 3, N-terminal domain"/>
    <property type="match status" value="1"/>
</dbReference>
<dbReference type="InterPro" id="IPR050288">
    <property type="entry name" value="Cellulose_deg_GH3"/>
</dbReference>
<dbReference type="InterPro" id="IPR019800">
    <property type="entry name" value="Glyco_hydro_3_AS"/>
</dbReference>
<dbReference type="InterPro" id="IPR002772">
    <property type="entry name" value="Glyco_hydro_3_C"/>
</dbReference>
<dbReference type="InterPro" id="IPR036881">
    <property type="entry name" value="Glyco_hydro_3_C_sf"/>
</dbReference>
<dbReference type="InterPro" id="IPR001764">
    <property type="entry name" value="Glyco_hydro_3_N"/>
</dbReference>
<dbReference type="InterPro" id="IPR036962">
    <property type="entry name" value="Glyco_hydro_3_N_sf"/>
</dbReference>
<dbReference type="InterPro" id="IPR017853">
    <property type="entry name" value="Glycoside_hydrolase_SF"/>
</dbReference>
<dbReference type="InterPro" id="IPR037524">
    <property type="entry name" value="PA14/GLEYA"/>
</dbReference>
<dbReference type="InterPro" id="IPR011658">
    <property type="entry name" value="PA14_dom"/>
</dbReference>
<dbReference type="PANTHER" id="PTHR42715">
    <property type="entry name" value="BETA-GLUCOSIDASE"/>
    <property type="match status" value="1"/>
</dbReference>
<dbReference type="PANTHER" id="PTHR42715:SF13">
    <property type="entry name" value="BETA-GLUCOSIDASE K-RELATED"/>
    <property type="match status" value="1"/>
</dbReference>
<dbReference type="Pfam" id="PF00933">
    <property type="entry name" value="Glyco_hydro_3"/>
    <property type="match status" value="1"/>
</dbReference>
<dbReference type="Pfam" id="PF01915">
    <property type="entry name" value="Glyco_hydro_3_C"/>
    <property type="match status" value="1"/>
</dbReference>
<dbReference type="Pfam" id="PF07691">
    <property type="entry name" value="PA14"/>
    <property type="match status" value="1"/>
</dbReference>
<dbReference type="PRINTS" id="PR00133">
    <property type="entry name" value="GLHYDRLASE3"/>
</dbReference>
<dbReference type="SMART" id="SM00758">
    <property type="entry name" value="PA14"/>
    <property type="match status" value="1"/>
</dbReference>
<dbReference type="SUPFAM" id="SSF51445">
    <property type="entry name" value="(Trans)glycosidases"/>
    <property type="match status" value="1"/>
</dbReference>
<dbReference type="SUPFAM" id="SSF52279">
    <property type="entry name" value="Beta-D-glucan exohydrolase, C-terminal domain"/>
    <property type="match status" value="1"/>
</dbReference>
<dbReference type="PROSITE" id="PS00775">
    <property type="entry name" value="GLYCOSYL_HYDROL_F3"/>
    <property type="match status" value="1"/>
</dbReference>
<dbReference type="PROSITE" id="PS51820">
    <property type="entry name" value="PA14"/>
    <property type="match status" value="1"/>
</dbReference>
<organism>
    <name type="scientific">Aspergillus fumigatus (strain ATCC MYA-4609 / CBS 101355 / FGSC A1100 / Af293)</name>
    <name type="common">Neosartorya fumigata</name>
    <dbReference type="NCBI Taxonomy" id="330879"/>
    <lineage>
        <taxon>Eukaryota</taxon>
        <taxon>Fungi</taxon>
        <taxon>Dikarya</taxon>
        <taxon>Ascomycota</taxon>
        <taxon>Pezizomycotina</taxon>
        <taxon>Eurotiomycetes</taxon>
        <taxon>Eurotiomycetidae</taxon>
        <taxon>Eurotiales</taxon>
        <taxon>Aspergillaceae</taxon>
        <taxon>Aspergillus</taxon>
        <taxon>Aspergillus subgen. Fumigati</taxon>
    </lineage>
</organism>
<reference key="1">
    <citation type="journal article" date="2005" name="Nature">
        <title>Genomic sequence of the pathogenic and allergenic filamentous fungus Aspergillus fumigatus.</title>
        <authorList>
            <person name="Nierman W.C."/>
            <person name="Pain A."/>
            <person name="Anderson M.J."/>
            <person name="Wortman J.R."/>
            <person name="Kim H.S."/>
            <person name="Arroyo J."/>
            <person name="Berriman M."/>
            <person name="Abe K."/>
            <person name="Archer D.B."/>
            <person name="Bermejo C."/>
            <person name="Bennett J.W."/>
            <person name="Bowyer P."/>
            <person name="Chen D."/>
            <person name="Collins M."/>
            <person name="Coulsen R."/>
            <person name="Davies R."/>
            <person name="Dyer P.S."/>
            <person name="Farman M.L."/>
            <person name="Fedorova N."/>
            <person name="Fedorova N.D."/>
            <person name="Feldblyum T.V."/>
            <person name="Fischer R."/>
            <person name="Fosker N."/>
            <person name="Fraser A."/>
            <person name="Garcia J.L."/>
            <person name="Garcia M.J."/>
            <person name="Goble A."/>
            <person name="Goldman G.H."/>
            <person name="Gomi K."/>
            <person name="Griffith-Jones S."/>
            <person name="Gwilliam R."/>
            <person name="Haas B.J."/>
            <person name="Haas H."/>
            <person name="Harris D.E."/>
            <person name="Horiuchi H."/>
            <person name="Huang J."/>
            <person name="Humphray S."/>
            <person name="Jimenez J."/>
            <person name="Keller N."/>
            <person name="Khouri H."/>
            <person name="Kitamoto K."/>
            <person name="Kobayashi T."/>
            <person name="Konzack S."/>
            <person name="Kulkarni R."/>
            <person name="Kumagai T."/>
            <person name="Lafton A."/>
            <person name="Latge J.-P."/>
            <person name="Li W."/>
            <person name="Lord A."/>
            <person name="Lu C."/>
            <person name="Majoros W.H."/>
            <person name="May G.S."/>
            <person name="Miller B.L."/>
            <person name="Mohamoud Y."/>
            <person name="Molina M."/>
            <person name="Monod M."/>
            <person name="Mouyna I."/>
            <person name="Mulligan S."/>
            <person name="Murphy L.D."/>
            <person name="O'Neil S."/>
            <person name="Paulsen I."/>
            <person name="Penalva M.A."/>
            <person name="Pertea M."/>
            <person name="Price C."/>
            <person name="Pritchard B.L."/>
            <person name="Quail M.A."/>
            <person name="Rabbinowitsch E."/>
            <person name="Rawlins N."/>
            <person name="Rajandream M.A."/>
            <person name="Reichard U."/>
            <person name="Renauld H."/>
            <person name="Robson G.D."/>
            <person name="Rodriguez de Cordoba S."/>
            <person name="Rodriguez-Pena J.M."/>
            <person name="Ronning C.M."/>
            <person name="Rutter S."/>
            <person name="Salzberg S.L."/>
            <person name="Sanchez M."/>
            <person name="Sanchez-Ferrero J.C."/>
            <person name="Saunders D."/>
            <person name="Seeger K."/>
            <person name="Squares R."/>
            <person name="Squares S."/>
            <person name="Takeuchi M."/>
            <person name="Tekaia F."/>
            <person name="Turner G."/>
            <person name="Vazquez de Aldana C.R."/>
            <person name="Weidman J."/>
            <person name="White O."/>
            <person name="Woodward J.R."/>
            <person name="Yu J.-H."/>
            <person name="Fraser C.M."/>
            <person name="Galagan J.E."/>
            <person name="Asai K."/>
            <person name="Machida M."/>
            <person name="Hall N."/>
            <person name="Barrell B.G."/>
            <person name="Denning D.W."/>
        </authorList>
    </citation>
    <scope>NUCLEOTIDE SEQUENCE [LARGE SCALE GENOMIC DNA]</scope>
    <source>
        <strain>ATCC MYA-4609 / CBS 101355 / FGSC A1100 / Af293</strain>
    </source>
</reference>
<sequence>MGEICPRREDFDIDYILKNASLLEKVSLLAGYDFWHTAPLPRFNVPSVRVSDGPNGVRGTKFFDGVRAACLPCGTGLAATWDQSLLYDAGVLIGQECLAKGAHCWLVPTVCIQRSPLGGRGFESFAEDPYATGKLAAAYIRGAQSTGVISTIKHFAANDQEHERISVNAVMSERALREVHLLPFQIAIADSAPGAVMTCYNKVNGQHLSESKEMLDGLLRREWGWKGLIMSDWFGTYSTAEALNAGLGLEMPGTTRLRGPLLELAISSRKVSRATLDERARTVLEFVQRARKAEVSAVESTRDFPEDRRLNRKLAADSIVLLKNESGLLPLNPQTLTSVALIGPNMKTAAFCGGGSASLQPYYSTSPYQGITSQLPPGVEVLYETGATSYAFIPELEASEVRTPEGQPGLRMRFYRDPPSVQERRVLMGFSNPELDRLFYADIEAELIAPATGPFQFGLAVYGSASLFLNDQLIIDNTTVQRGGTFFFGKGTLEETATVDLVQGQSYQIKVQFASGPSSKLVKPGVVNFGGGAGRLGMVQVVDPERAIARAVEAAKRADITILGVGLTRDHESEGFDRSHMDLPPAVASLVTAVLDVAPDAILLTQSGTPFSMLPWADLVKTHLHAWFGGNELGNGIADVLFGVVNPSGKLPLSFPRRIEDTPTYLNFGSERGQVTYGEGIYVGYKLLRKSPTSCALSIRARFVVHLLCVLRFDGRHRVRYTECSKLGRRGRSGSSPAVYRGRSNNVVNRTSHQGAQRISKGGFAAR</sequence>
<comment type="function">
    <text evidence="1">Beta-glucosidases are one of a number of cellulolytic enzymes involved in the degradation of cellulosic biomass. Catalyzes the last step releasing glucose from the inhibitory cellobiose (By similarity).</text>
</comment>
<comment type="catalytic activity">
    <reaction>
        <text>Hydrolysis of terminal, non-reducing beta-D-glucosyl residues with release of beta-D-glucose.</text>
        <dbReference type="EC" id="3.2.1.21"/>
    </reaction>
</comment>
<comment type="pathway">
    <text>Glycan metabolism; cellulose degradation.</text>
</comment>
<comment type="subcellular location">
    <subcellularLocation>
        <location evidence="1">Secreted</location>
    </subcellularLocation>
</comment>
<comment type="similarity">
    <text evidence="5">Belongs to the glycosyl hydrolase 3 family.</text>
</comment>